<organism>
    <name type="scientific">Leptospira borgpetersenii serovar Hardjo-bovis (strain L550)</name>
    <dbReference type="NCBI Taxonomy" id="355276"/>
    <lineage>
        <taxon>Bacteria</taxon>
        <taxon>Pseudomonadati</taxon>
        <taxon>Spirochaetota</taxon>
        <taxon>Spirochaetia</taxon>
        <taxon>Leptospirales</taxon>
        <taxon>Leptospiraceae</taxon>
        <taxon>Leptospira</taxon>
    </lineage>
</organism>
<reference key="1">
    <citation type="journal article" date="2006" name="Proc. Natl. Acad. Sci. U.S.A.">
        <title>Genome reduction in Leptospira borgpetersenii reflects limited transmission potential.</title>
        <authorList>
            <person name="Bulach D.M."/>
            <person name="Zuerner R.L."/>
            <person name="Wilson P."/>
            <person name="Seemann T."/>
            <person name="McGrath A."/>
            <person name="Cullen P.A."/>
            <person name="Davis J."/>
            <person name="Johnson M."/>
            <person name="Kuczek E."/>
            <person name="Alt D.P."/>
            <person name="Peterson-Burch B."/>
            <person name="Coppel R.L."/>
            <person name="Rood J.I."/>
            <person name="Davies J.K."/>
            <person name="Adler B."/>
        </authorList>
    </citation>
    <scope>NUCLEOTIDE SEQUENCE [LARGE SCALE GENOMIC DNA]</scope>
    <source>
        <strain>L550</strain>
    </source>
</reference>
<gene>
    <name evidence="1" type="primary">rpsC1</name>
    <name type="synonym">rpsC-1</name>
    <name type="ordered locus">LBL_0419</name>
</gene>
<gene>
    <name evidence="1" type="primary">rpsC2</name>
    <name type="synonym">rpsC</name>
    <name type="ordered locus">LBL_0459</name>
</gene>
<dbReference type="EMBL" id="CP000348">
    <property type="protein sequence ID" value="ABJ78017.1"/>
    <property type="molecule type" value="Genomic_DNA"/>
</dbReference>
<dbReference type="EMBL" id="CP000348">
    <property type="protein sequence ID" value="ABJ78057.1"/>
    <property type="molecule type" value="Genomic_DNA"/>
</dbReference>
<dbReference type="RefSeq" id="WP_002722992.1">
    <property type="nucleotide sequence ID" value="NC_008508.1"/>
</dbReference>
<dbReference type="SMR" id="Q055D8"/>
<dbReference type="GeneID" id="61172956"/>
<dbReference type="KEGG" id="lbl:LBL_0419"/>
<dbReference type="KEGG" id="lbl:LBL_0459"/>
<dbReference type="HOGENOM" id="CLU_058591_0_2_12"/>
<dbReference type="GO" id="GO:0022627">
    <property type="term" value="C:cytosolic small ribosomal subunit"/>
    <property type="evidence" value="ECO:0007669"/>
    <property type="project" value="TreeGrafter"/>
</dbReference>
<dbReference type="GO" id="GO:0003729">
    <property type="term" value="F:mRNA binding"/>
    <property type="evidence" value="ECO:0007669"/>
    <property type="project" value="UniProtKB-UniRule"/>
</dbReference>
<dbReference type="GO" id="GO:0019843">
    <property type="term" value="F:rRNA binding"/>
    <property type="evidence" value="ECO:0007669"/>
    <property type="project" value="UniProtKB-UniRule"/>
</dbReference>
<dbReference type="GO" id="GO:0003735">
    <property type="term" value="F:structural constituent of ribosome"/>
    <property type="evidence" value="ECO:0007669"/>
    <property type="project" value="InterPro"/>
</dbReference>
<dbReference type="GO" id="GO:0006412">
    <property type="term" value="P:translation"/>
    <property type="evidence" value="ECO:0007669"/>
    <property type="project" value="UniProtKB-UniRule"/>
</dbReference>
<dbReference type="CDD" id="cd02412">
    <property type="entry name" value="KH-II_30S_S3"/>
    <property type="match status" value="1"/>
</dbReference>
<dbReference type="FunFam" id="3.30.1140.32:FF:000010">
    <property type="entry name" value="30S ribosomal protein S3"/>
    <property type="match status" value="1"/>
</dbReference>
<dbReference type="FunFam" id="3.30.300.20:FF:000001">
    <property type="entry name" value="30S ribosomal protein S3"/>
    <property type="match status" value="1"/>
</dbReference>
<dbReference type="Gene3D" id="3.30.300.20">
    <property type="match status" value="1"/>
</dbReference>
<dbReference type="Gene3D" id="3.30.1140.32">
    <property type="entry name" value="Ribosomal protein S3, C-terminal domain"/>
    <property type="match status" value="1"/>
</dbReference>
<dbReference type="HAMAP" id="MF_01309_B">
    <property type="entry name" value="Ribosomal_uS3_B"/>
    <property type="match status" value="1"/>
</dbReference>
<dbReference type="InterPro" id="IPR004087">
    <property type="entry name" value="KH_dom"/>
</dbReference>
<dbReference type="InterPro" id="IPR015946">
    <property type="entry name" value="KH_dom-like_a/b"/>
</dbReference>
<dbReference type="InterPro" id="IPR004044">
    <property type="entry name" value="KH_dom_type_2"/>
</dbReference>
<dbReference type="InterPro" id="IPR009019">
    <property type="entry name" value="KH_sf_prok-type"/>
</dbReference>
<dbReference type="InterPro" id="IPR036419">
    <property type="entry name" value="Ribosomal_S3_C_sf"/>
</dbReference>
<dbReference type="InterPro" id="IPR005704">
    <property type="entry name" value="Ribosomal_uS3_bac-typ"/>
</dbReference>
<dbReference type="InterPro" id="IPR001351">
    <property type="entry name" value="Ribosomal_uS3_C"/>
</dbReference>
<dbReference type="InterPro" id="IPR018280">
    <property type="entry name" value="Ribosomal_uS3_CS"/>
</dbReference>
<dbReference type="NCBIfam" id="TIGR01009">
    <property type="entry name" value="rpsC_bact"/>
    <property type="match status" value="1"/>
</dbReference>
<dbReference type="PANTHER" id="PTHR11760">
    <property type="entry name" value="30S/40S RIBOSOMAL PROTEIN S3"/>
    <property type="match status" value="1"/>
</dbReference>
<dbReference type="PANTHER" id="PTHR11760:SF19">
    <property type="entry name" value="SMALL RIBOSOMAL SUBUNIT PROTEIN US3C"/>
    <property type="match status" value="1"/>
</dbReference>
<dbReference type="Pfam" id="PF07650">
    <property type="entry name" value="KH_2"/>
    <property type="match status" value="1"/>
</dbReference>
<dbReference type="Pfam" id="PF00189">
    <property type="entry name" value="Ribosomal_S3_C"/>
    <property type="match status" value="1"/>
</dbReference>
<dbReference type="SMART" id="SM00322">
    <property type="entry name" value="KH"/>
    <property type="match status" value="1"/>
</dbReference>
<dbReference type="SUPFAM" id="SSF54814">
    <property type="entry name" value="Prokaryotic type KH domain (KH-domain type II)"/>
    <property type="match status" value="1"/>
</dbReference>
<dbReference type="SUPFAM" id="SSF54821">
    <property type="entry name" value="Ribosomal protein S3 C-terminal domain"/>
    <property type="match status" value="1"/>
</dbReference>
<dbReference type="PROSITE" id="PS50823">
    <property type="entry name" value="KH_TYPE_2"/>
    <property type="match status" value="1"/>
</dbReference>
<dbReference type="PROSITE" id="PS00548">
    <property type="entry name" value="RIBOSOMAL_S3"/>
    <property type="match status" value="1"/>
</dbReference>
<comment type="function">
    <text evidence="1">Binds the lower part of the 30S subunit head. Binds mRNA in the 70S ribosome, positioning it for translation.</text>
</comment>
<comment type="subunit">
    <text evidence="1">Part of the 30S ribosomal subunit. Forms a tight complex with proteins S10 and S14.</text>
</comment>
<comment type="similarity">
    <text evidence="1">Belongs to the universal ribosomal protein uS3 family.</text>
</comment>
<evidence type="ECO:0000255" key="1">
    <source>
        <dbReference type="HAMAP-Rule" id="MF_01309"/>
    </source>
</evidence>
<evidence type="ECO:0000305" key="2"/>
<keyword id="KW-0687">Ribonucleoprotein</keyword>
<keyword id="KW-0689">Ribosomal protein</keyword>
<keyword id="KW-0694">RNA-binding</keyword>
<keyword id="KW-0699">rRNA-binding</keyword>
<name>RS3_LEPBL</name>
<feature type="chain" id="PRO_0000293816" description="Small ribosomal subunit protein uS3">
    <location>
        <begin position="1"/>
        <end position="225"/>
    </location>
</feature>
<feature type="domain" description="KH type-2" evidence="1">
    <location>
        <begin position="38"/>
        <end position="106"/>
    </location>
</feature>
<protein>
    <recommendedName>
        <fullName evidence="1">Small ribosomal subunit protein uS3</fullName>
    </recommendedName>
    <alternativeName>
        <fullName evidence="2">30S ribosomal protein S3</fullName>
    </alternativeName>
</protein>
<accession>Q055D8</accession>
<proteinExistence type="inferred from homology"/>
<sequence length="225" mass="25662">MGQKVNPIGLRIGITRGWDSIWFSQSDYKKNLHEDIKIRKFIQSRFSNAGVVKVVIERFPEKINVNLHTAKPGIVIGQKGSNIEAVKKILKTMTEKPVNLNIIEVKKPETVAQCIAESIALQIEQRQPFRRVMKQELRRAMRGGVEGIKILISGRLNGADMARRENYKEGRIPLHTLRAKIDLGFKEAKTTFGQIGVKVWTYSGDFIQSKEESEEDKYAVKRRTS</sequence>